<dbReference type="EMBL" id="AE005674">
    <property type="protein sequence ID" value="AAN44706.2"/>
    <property type="molecule type" value="Genomic_DNA"/>
</dbReference>
<dbReference type="EMBL" id="AE014073">
    <property type="protein sequence ID" value="AAP18520.1"/>
    <property type="molecule type" value="Genomic_DNA"/>
</dbReference>
<dbReference type="RefSeq" id="WP_000669785.1">
    <property type="nucleotide sequence ID" value="NZ_WPGW01000004.1"/>
</dbReference>
<dbReference type="SMR" id="P0ADV4"/>
<dbReference type="STRING" id="198214.SF3240"/>
<dbReference type="PaxDb" id="198214-SF3240"/>
<dbReference type="GeneID" id="93778781"/>
<dbReference type="KEGG" id="sfl:SF3240"/>
<dbReference type="KEGG" id="sfx:S3458"/>
<dbReference type="PATRIC" id="fig|198214.7.peg.3841"/>
<dbReference type="HOGENOM" id="CLU_095993_2_1_6"/>
<dbReference type="Proteomes" id="UP000001006">
    <property type="component" value="Chromosome"/>
</dbReference>
<dbReference type="Proteomes" id="UP000002673">
    <property type="component" value="Chromosome"/>
</dbReference>
<dbReference type="GO" id="GO:0009279">
    <property type="term" value="C:cell outer membrane"/>
    <property type="evidence" value="ECO:0007669"/>
    <property type="project" value="TreeGrafter"/>
</dbReference>
<dbReference type="GO" id="GO:0030288">
    <property type="term" value="C:outer membrane-bounded periplasmic space"/>
    <property type="evidence" value="ECO:0007669"/>
    <property type="project" value="TreeGrafter"/>
</dbReference>
<dbReference type="GO" id="GO:0017089">
    <property type="term" value="F:glycolipid transfer activity"/>
    <property type="evidence" value="ECO:0007669"/>
    <property type="project" value="TreeGrafter"/>
</dbReference>
<dbReference type="GO" id="GO:0001530">
    <property type="term" value="F:lipopolysaccharide binding"/>
    <property type="evidence" value="ECO:0007669"/>
    <property type="project" value="InterPro"/>
</dbReference>
<dbReference type="GO" id="GO:0043165">
    <property type="term" value="P:Gram-negative-bacterium-type cell outer membrane assembly"/>
    <property type="evidence" value="ECO:0007669"/>
    <property type="project" value="UniProtKB-UniRule"/>
</dbReference>
<dbReference type="GO" id="GO:0015920">
    <property type="term" value="P:lipopolysaccharide transport"/>
    <property type="evidence" value="ECO:0007669"/>
    <property type="project" value="UniProtKB-UniRule"/>
</dbReference>
<dbReference type="FunFam" id="2.60.450.10:FF:000002">
    <property type="entry name" value="Lipopolysaccharide export system protein LptA"/>
    <property type="match status" value="1"/>
</dbReference>
<dbReference type="Gene3D" id="2.60.450.10">
    <property type="entry name" value="Lipopolysaccharide (LPS) transport protein A like domain"/>
    <property type="match status" value="1"/>
</dbReference>
<dbReference type="HAMAP" id="MF_01914">
    <property type="entry name" value="LPS_assembly_LptA"/>
    <property type="match status" value="1"/>
</dbReference>
<dbReference type="InterPro" id="IPR052037">
    <property type="entry name" value="LPS_export_LptA"/>
</dbReference>
<dbReference type="InterPro" id="IPR014340">
    <property type="entry name" value="LptA"/>
</dbReference>
<dbReference type="InterPro" id="IPR005653">
    <property type="entry name" value="OstA-like_N"/>
</dbReference>
<dbReference type="NCBIfam" id="TIGR03002">
    <property type="entry name" value="outer_YhbN_LptA"/>
    <property type="match status" value="1"/>
</dbReference>
<dbReference type="NCBIfam" id="NF008143">
    <property type="entry name" value="PRK10894.1"/>
    <property type="match status" value="1"/>
</dbReference>
<dbReference type="PANTHER" id="PTHR36504">
    <property type="entry name" value="LIPOPOLYSACCHARIDE EXPORT SYSTEM PROTEIN LPTA"/>
    <property type="match status" value="1"/>
</dbReference>
<dbReference type="PANTHER" id="PTHR36504:SF1">
    <property type="entry name" value="LIPOPOLYSACCHARIDE EXPORT SYSTEM PROTEIN LPTA"/>
    <property type="match status" value="1"/>
</dbReference>
<dbReference type="Pfam" id="PF03968">
    <property type="entry name" value="LptD_N"/>
    <property type="match status" value="1"/>
</dbReference>
<protein>
    <recommendedName>
        <fullName evidence="1">Lipopolysaccharide export system protein LptA</fullName>
    </recommendedName>
</protein>
<reference key="1">
    <citation type="journal article" date="2002" name="Nucleic Acids Res.">
        <title>Genome sequence of Shigella flexneri 2a: insights into pathogenicity through comparison with genomes of Escherichia coli K12 and O157.</title>
        <authorList>
            <person name="Jin Q."/>
            <person name="Yuan Z."/>
            <person name="Xu J."/>
            <person name="Wang Y."/>
            <person name="Shen Y."/>
            <person name="Lu W."/>
            <person name="Wang J."/>
            <person name="Liu H."/>
            <person name="Yang J."/>
            <person name="Yang F."/>
            <person name="Zhang X."/>
            <person name="Zhang J."/>
            <person name="Yang G."/>
            <person name="Wu H."/>
            <person name="Qu D."/>
            <person name="Dong J."/>
            <person name="Sun L."/>
            <person name="Xue Y."/>
            <person name="Zhao A."/>
            <person name="Gao Y."/>
            <person name="Zhu J."/>
            <person name="Kan B."/>
            <person name="Ding K."/>
            <person name="Chen S."/>
            <person name="Cheng H."/>
            <person name="Yao Z."/>
            <person name="He B."/>
            <person name="Chen R."/>
            <person name="Ma D."/>
            <person name="Qiang B."/>
            <person name="Wen Y."/>
            <person name="Hou Y."/>
            <person name="Yu J."/>
        </authorList>
    </citation>
    <scope>NUCLEOTIDE SEQUENCE [LARGE SCALE GENOMIC DNA]</scope>
    <source>
        <strain>301 / Serotype 2a</strain>
    </source>
</reference>
<reference key="2">
    <citation type="journal article" date="2003" name="Infect. Immun.">
        <title>Complete genome sequence and comparative genomics of Shigella flexneri serotype 2a strain 2457T.</title>
        <authorList>
            <person name="Wei J."/>
            <person name="Goldberg M.B."/>
            <person name="Burland V."/>
            <person name="Venkatesan M.M."/>
            <person name="Deng W."/>
            <person name="Fournier G."/>
            <person name="Mayhew G.F."/>
            <person name="Plunkett G. III"/>
            <person name="Rose D.J."/>
            <person name="Darling A."/>
            <person name="Mau B."/>
            <person name="Perna N.T."/>
            <person name="Payne S.M."/>
            <person name="Runyen-Janecky L.J."/>
            <person name="Zhou S."/>
            <person name="Schwartz D.C."/>
            <person name="Blattner F.R."/>
        </authorList>
    </citation>
    <scope>NUCLEOTIDE SEQUENCE [LARGE SCALE GENOMIC DNA]</scope>
    <source>
        <strain>ATCC 700930 / 2457T / Serotype 2a</strain>
    </source>
</reference>
<evidence type="ECO:0000255" key="1">
    <source>
        <dbReference type="HAMAP-Rule" id="MF_01914"/>
    </source>
</evidence>
<evidence type="ECO:0000256" key="2">
    <source>
        <dbReference type="SAM" id="MobiDB-lite"/>
    </source>
</evidence>
<organism>
    <name type="scientific">Shigella flexneri</name>
    <dbReference type="NCBI Taxonomy" id="623"/>
    <lineage>
        <taxon>Bacteria</taxon>
        <taxon>Pseudomonadati</taxon>
        <taxon>Pseudomonadota</taxon>
        <taxon>Gammaproteobacteria</taxon>
        <taxon>Enterobacterales</taxon>
        <taxon>Enterobacteriaceae</taxon>
        <taxon>Shigella</taxon>
    </lineage>
</organism>
<accession>P0ADV4</accession>
<accession>P38685</accession>
<proteinExistence type="inferred from homology"/>
<sequence length="185" mass="20127">MKFKTNKLSLNLVLASSLLAASIPAFAVTGDTDQPIHIESDQQSLDMQGNVVTFTGNVIVTQGTIKINADKVVVTRPGGEQGKEVIDGYGKPATFYQMQDNGKPVEGHASQMHYELAKDFVVLTGNAYLQQVDSNIKGDKITYLVKEQKMQAFSDKGKRVTTVLVPSQLQDKNNKGQTPAQKKGN</sequence>
<gene>
    <name evidence="1" type="primary">lptA</name>
    <name type="ordered locus">SF3240</name>
    <name type="ordered locus">S3458</name>
</gene>
<feature type="signal peptide" evidence="1">
    <location>
        <begin position="1"/>
        <end position="27"/>
    </location>
</feature>
<feature type="chain" id="PRO_0000043111" description="Lipopolysaccharide export system protein LptA">
    <location>
        <begin position="28"/>
        <end position="185"/>
    </location>
</feature>
<feature type="region of interest" description="Disordered" evidence="2">
    <location>
        <begin position="166"/>
        <end position="185"/>
    </location>
</feature>
<comment type="function">
    <text evidence="1">Involved in the assembly of lipopolysaccharide (LPS). Required for the translocation of LPS from the inner membrane to the outer membrane. May form a bridge between the inner membrane and the outer membrane, via interactions with LptC and LptD, thereby facilitating LPS transfer across the periplasm.</text>
</comment>
<comment type="subunit">
    <text evidence="1">Component of the lipopolysaccharide transport and assembly complex.</text>
</comment>
<comment type="subcellular location">
    <subcellularLocation>
        <location evidence="1">Periplasm</location>
    </subcellularLocation>
</comment>
<comment type="similarity">
    <text evidence="1">Belongs to the LptA family.</text>
</comment>
<keyword id="KW-0574">Periplasm</keyword>
<keyword id="KW-1185">Reference proteome</keyword>
<keyword id="KW-0732">Signal</keyword>
<keyword id="KW-0813">Transport</keyword>
<name>LPTA_SHIFL</name>